<proteinExistence type="inferred from homology"/>
<feature type="chain" id="PRO_0000275343" description="Cytochrome b6">
    <location>
        <begin position="1"/>
        <end position="215"/>
    </location>
</feature>
<feature type="transmembrane region" description="Helical" evidence="1">
    <location>
        <begin position="32"/>
        <end position="52"/>
    </location>
</feature>
<feature type="transmembrane region" description="Helical" evidence="1">
    <location>
        <begin position="90"/>
        <end position="110"/>
    </location>
</feature>
<feature type="transmembrane region" description="Helical" evidence="1">
    <location>
        <begin position="116"/>
        <end position="136"/>
    </location>
</feature>
<feature type="transmembrane region" description="Helical" evidence="1">
    <location>
        <begin position="186"/>
        <end position="206"/>
    </location>
</feature>
<feature type="binding site" description="covalent" evidence="1">
    <location>
        <position position="35"/>
    </location>
    <ligand>
        <name>heme c</name>
        <dbReference type="ChEBI" id="CHEBI:61717"/>
    </ligand>
</feature>
<feature type="binding site" description="axial binding residue" evidence="1">
    <location>
        <position position="86"/>
    </location>
    <ligand>
        <name>heme b</name>
        <dbReference type="ChEBI" id="CHEBI:60344"/>
        <label>2</label>
    </ligand>
    <ligandPart>
        <name>Fe</name>
        <dbReference type="ChEBI" id="CHEBI:18248"/>
    </ligandPart>
</feature>
<feature type="binding site" description="axial binding residue" evidence="1">
    <location>
        <position position="100"/>
    </location>
    <ligand>
        <name>heme b</name>
        <dbReference type="ChEBI" id="CHEBI:60344"/>
        <label>1</label>
    </ligand>
    <ligandPart>
        <name>Fe</name>
        <dbReference type="ChEBI" id="CHEBI:18248"/>
    </ligandPart>
</feature>
<feature type="binding site" description="axial binding residue" evidence="1">
    <location>
        <position position="187"/>
    </location>
    <ligand>
        <name>heme b</name>
        <dbReference type="ChEBI" id="CHEBI:60344"/>
        <label>2</label>
    </ligand>
    <ligandPart>
        <name>Fe</name>
        <dbReference type="ChEBI" id="CHEBI:18248"/>
    </ligandPart>
</feature>
<feature type="binding site" description="axial binding residue" evidence="1">
    <location>
        <position position="202"/>
    </location>
    <ligand>
        <name>heme b</name>
        <dbReference type="ChEBI" id="CHEBI:60344"/>
        <label>1</label>
    </ligand>
    <ligandPart>
        <name>Fe</name>
        <dbReference type="ChEBI" id="CHEBI:18248"/>
    </ligandPart>
</feature>
<protein>
    <recommendedName>
        <fullName evidence="1">Cytochrome b6</fullName>
    </recommendedName>
</protein>
<dbReference type="EMBL" id="EF067920">
    <property type="protein sequence ID" value="ABK20616.1"/>
    <property type="molecule type" value="Genomic_DNA"/>
</dbReference>
<dbReference type="RefSeq" id="YP_874393.1">
    <property type="nucleotide sequence ID" value="NC_008588.1"/>
</dbReference>
<dbReference type="SMR" id="A0T0B8"/>
<dbReference type="STRING" id="556484.A0T0B8"/>
<dbReference type="GeneID" id="4524678"/>
<dbReference type="InParanoid" id="A0T0B8"/>
<dbReference type="Proteomes" id="UP000000759">
    <property type="component" value="Chloroplast"/>
</dbReference>
<dbReference type="GO" id="GO:0009535">
    <property type="term" value="C:chloroplast thylakoid membrane"/>
    <property type="evidence" value="ECO:0007669"/>
    <property type="project" value="UniProtKB-SubCell"/>
</dbReference>
<dbReference type="GO" id="GO:0045158">
    <property type="term" value="F:electron transporter, transferring electrons within cytochrome b6/f complex of photosystem II activity"/>
    <property type="evidence" value="ECO:0007669"/>
    <property type="project" value="UniProtKB-UniRule"/>
</dbReference>
<dbReference type="GO" id="GO:0046872">
    <property type="term" value="F:metal ion binding"/>
    <property type="evidence" value="ECO:0007669"/>
    <property type="project" value="UniProtKB-KW"/>
</dbReference>
<dbReference type="GO" id="GO:0016491">
    <property type="term" value="F:oxidoreductase activity"/>
    <property type="evidence" value="ECO:0007669"/>
    <property type="project" value="InterPro"/>
</dbReference>
<dbReference type="GO" id="GO:0015979">
    <property type="term" value="P:photosynthesis"/>
    <property type="evidence" value="ECO:0007669"/>
    <property type="project" value="UniProtKB-UniRule"/>
</dbReference>
<dbReference type="GO" id="GO:0022904">
    <property type="term" value="P:respiratory electron transport chain"/>
    <property type="evidence" value="ECO:0007669"/>
    <property type="project" value="InterPro"/>
</dbReference>
<dbReference type="CDD" id="cd00284">
    <property type="entry name" value="Cytochrome_b_N"/>
    <property type="match status" value="1"/>
</dbReference>
<dbReference type="FunFam" id="1.20.810.10:FF:000001">
    <property type="entry name" value="Cytochrome b6"/>
    <property type="match status" value="1"/>
</dbReference>
<dbReference type="Gene3D" id="1.20.810.10">
    <property type="entry name" value="Cytochrome Bc1 Complex, Chain C"/>
    <property type="match status" value="1"/>
</dbReference>
<dbReference type="HAMAP" id="MF_00633">
    <property type="entry name" value="Cytb6_f_cytb6"/>
    <property type="match status" value="1"/>
</dbReference>
<dbReference type="InterPro" id="IPR005797">
    <property type="entry name" value="Cyt_b/b6_N"/>
</dbReference>
<dbReference type="InterPro" id="IPR023530">
    <property type="entry name" value="Cyt_B6_PetB"/>
</dbReference>
<dbReference type="InterPro" id="IPR027387">
    <property type="entry name" value="Cytb/b6-like_sf"/>
</dbReference>
<dbReference type="InterPro" id="IPR048259">
    <property type="entry name" value="Cytochrome_b_N_euk/bac"/>
</dbReference>
<dbReference type="InterPro" id="IPR016174">
    <property type="entry name" value="Di-haem_cyt_TM"/>
</dbReference>
<dbReference type="NCBIfam" id="NF002990">
    <property type="entry name" value="PRK03735.1"/>
    <property type="match status" value="1"/>
</dbReference>
<dbReference type="PANTHER" id="PTHR19271">
    <property type="entry name" value="CYTOCHROME B"/>
    <property type="match status" value="1"/>
</dbReference>
<dbReference type="PANTHER" id="PTHR19271:SF16">
    <property type="entry name" value="CYTOCHROME B"/>
    <property type="match status" value="1"/>
</dbReference>
<dbReference type="Pfam" id="PF00033">
    <property type="entry name" value="Cytochrome_B"/>
    <property type="match status" value="1"/>
</dbReference>
<dbReference type="PIRSF" id="PIRSF000032">
    <property type="entry name" value="Cytochrome_b6"/>
    <property type="match status" value="1"/>
</dbReference>
<dbReference type="SUPFAM" id="SSF81342">
    <property type="entry name" value="Transmembrane di-heme cytochromes"/>
    <property type="match status" value="1"/>
</dbReference>
<dbReference type="PROSITE" id="PS51002">
    <property type="entry name" value="CYTB_NTER"/>
    <property type="match status" value="1"/>
</dbReference>
<geneLocation type="chloroplast"/>
<sequence length="215" mass="23992">MNKVYDWFEERLEVQAIADDISSKYVPPHVNIFYCFGGLVLTCFLIQVATGFAMTFYYRPSVVDAFASVEYIMTSVNFGWLIRSIHRWSASMMVLMMVLHVFRVYLTGGFKKPRELTWVTGVTLSVVTVSFGVTGYSLPWDQVGFWACKIVTGVPAAVPIVGEPLVLILRGGESVGQSTLTRFYSAHTFVLPLAAAVLMLTHFLMIRKQGISGPL</sequence>
<keyword id="KW-0150">Chloroplast</keyword>
<keyword id="KW-0249">Electron transport</keyword>
<keyword id="KW-0349">Heme</keyword>
<keyword id="KW-0408">Iron</keyword>
<keyword id="KW-0472">Membrane</keyword>
<keyword id="KW-0479">Metal-binding</keyword>
<keyword id="KW-0602">Photosynthesis</keyword>
<keyword id="KW-0934">Plastid</keyword>
<keyword id="KW-1185">Reference proteome</keyword>
<keyword id="KW-0793">Thylakoid</keyword>
<keyword id="KW-0812">Transmembrane</keyword>
<keyword id="KW-1133">Transmembrane helix</keyword>
<keyword id="KW-0813">Transport</keyword>
<name>CYB6_PHATC</name>
<organism>
    <name type="scientific">Phaeodactylum tricornutum (strain CCAP 1055/1)</name>
    <dbReference type="NCBI Taxonomy" id="556484"/>
    <lineage>
        <taxon>Eukaryota</taxon>
        <taxon>Sar</taxon>
        <taxon>Stramenopiles</taxon>
        <taxon>Ochrophyta</taxon>
        <taxon>Bacillariophyta</taxon>
        <taxon>Bacillariophyceae</taxon>
        <taxon>Bacillariophycidae</taxon>
        <taxon>Naviculales</taxon>
        <taxon>Phaeodactylaceae</taxon>
        <taxon>Phaeodactylum</taxon>
    </lineage>
</organism>
<comment type="function">
    <text evidence="1">Component of the cytochrome b6-f complex, which mediates electron transfer between photosystem II (PSII) and photosystem I (PSI), cyclic electron flow around PSI, and state transitions.</text>
</comment>
<comment type="cofactor">
    <cofactor evidence="1">
        <name>heme b</name>
        <dbReference type="ChEBI" id="CHEBI:60344"/>
    </cofactor>
    <text evidence="1">Binds 2 heme b groups non-covalently with two histidine residues as axial ligands.</text>
</comment>
<comment type="cofactor">
    <cofactor evidence="1">
        <name>heme c</name>
        <dbReference type="ChEBI" id="CHEBI:61717"/>
    </cofactor>
    <text evidence="1">Binds one heme group covalently by a single cysteine link with no axial amino acid ligand. This heme was named heme ci.</text>
</comment>
<comment type="subunit">
    <text evidence="1">The 4 large subunits of the cytochrome b6-f complex are cytochrome b6, subunit IV (17 kDa polypeptide, PetD), cytochrome f and the Rieske protein, while the 4 small subunits are PetG, PetL, PetM and PetN. The complex functions as a dimer.</text>
</comment>
<comment type="subcellular location">
    <subcellularLocation>
        <location evidence="1">Plastid</location>
        <location evidence="1">Chloroplast thylakoid membrane</location>
        <topology evidence="1">Multi-pass membrane protein</topology>
    </subcellularLocation>
</comment>
<comment type="miscellaneous">
    <text evidence="1">Heme 1 (or BH or b566) is high-potential and absorbs at about 566 nm, and heme 2 (or BL or b562) is low-potential and absorbs at about 562 nm.</text>
</comment>
<comment type="similarity">
    <text evidence="1">Belongs to the cytochrome b family. PetB subfamily.</text>
</comment>
<accession>A0T0B8</accession>
<reference key="1">
    <citation type="journal article" date="2007" name="Mol. Genet. Genomics">
        <title>Chloroplast genomes of the diatoms Phaeodactylum tricornutum and Thalassiosira pseudonana: comparison with other plastid genomes of the red lineage.</title>
        <authorList>
            <person name="Oudot-Le Secq M.-P."/>
            <person name="Grimwood J."/>
            <person name="Shapiro H."/>
            <person name="Armbrust E.V."/>
            <person name="Bowler C."/>
            <person name="Green B.R."/>
        </authorList>
    </citation>
    <scope>NUCLEOTIDE SEQUENCE [LARGE SCALE GENOMIC DNA]</scope>
    <source>
        <strain>CCAP 1055/1</strain>
    </source>
</reference>
<gene>
    <name evidence="1" type="primary">petB</name>
</gene>
<evidence type="ECO:0000255" key="1">
    <source>
        <dbReference type="HAMAP-Rule" id="MF_00633"/>
    </source>
</evidence>